<name>Y5254_DICDI</name>
<accession>Q54UP0</accession>
<dbReference type="EMBL" id="AAFI02000039">
    <property type="protein sequence ID" value="EAL66999.1"/>
    <property type="molecule type" value="Genomic_DNA"/>
</dbReference>
<dbReference type="RefSeq" id="XP_640981.1">
    <property type="nucleotide sequence ID" value="XM_635889.1"/>
</dbReference>
<dbReference type="SMR" id="Q54UP0"/>
<dbReference type="PaxDb" id="44689-DDB0215254"/>
<dbReference type="EnsemblProtists" id="EAL66999">
    <property type="protein sequence ID" value="EAL66999"/>
    <property type="gene ID" value="DDB_G0280915"/>
</dbReference>
<dbReference type="GeneID" id="8622787"/>
<dbReference type="KEGG" id="ddi:DDB_G0280915"/>
<dbReference type="dictyBase" id="DDB_G0280915"/>
<dbReference type="VEuPathDB" id="AmoebaDB:DDB_G0280915"/>
<dbReference type="HOGENOM" id="CLU_1581403_0_0_1"/>
<dbReference type="InParanoid" id="Q54UP0"/>
<dbReference type="PRO" id="PR:Q54UP0"/>
<dbReference type="Proteomes" id="UP000002195">
    <property type="component" value="Chromosome 3"/>
</dbReference>
<dbReference type="GO" id="GO:0016020">
    <property type="term" value="C:membrane"/>
    <property type="evidence" value="ECO:0007669"/>
    <property type="project" value="UniProtKB-SubCell"/>
</dbReference>
<proteinExistence type="predicted"/>
<reference key="1">
    <citation type="journal article" date="2005" name="Nature">
        <title>The genome of the social amoeba Dictyostelium discoideum.</title>
        <authorList>
            <person name="Eichinger L."/>
            <person name="Pachebat J.A."/>
            <person name="Gloeckner G."/>
            <person name="Rajandream M.A."/>
            <person name="Sucgang R."/>
            <person name="Berriman M."/>
            <person name="Song J."/>
            <person name="Olsen R."/>
            <person name="Szafranski K."/>
            <person name="Xu Q."/>
            <person name="Tunggal B."/>
            <person name="Kummerfeld S."/>
            <person name="Madera M."/>
            <person name="Konfortov B.A."/>
            <person name="Rivero F."/>
            <person name="Bankier A.T."/>
            <person name="Lehmann R."/>
            <person name="Hamlin N."/>
            <person name="Davies R."/>
            <person name="Gaudet P."/>
            <person name="Fey P."/>
            <person name="Pilcher K."/>
            <person name="Chen G."/>
            <person name="Saunders D."/>
            <person name="Sodergren E.J."/>
            <person name="Davis P."/>
            <person name="Kerhornou A."/>
            <person name="Nie X."/>
            <person name="Hall N."/>
            <person name="Anjard C."/>
            <person name="Hemphill L."/>
            <person name="Bason N."/>
            <person name="Farbrother P."/>
            <person name="Desany B."/>
            <person name="Just E."/>
            <person name="Morio T."/>
            <person name="Rost R."/>
            <person name="Churcher C.M."/>
            <person name="Cooper J."/>
            <person name="Haydock S."/>
            <person name="van Driessche N."/>
            <person name="Cronin A."/>
            <person name="Goodhead I."/>
            <person name="Muzny D.M."/>
            <person name="Mourier T."/>
            <person name="Pain A."/>
            <person name="Lu M."/>
            <person name="Harper D."/>
            <person name="Lindsay R."/>
            <person name="Hauser H."/>
            <person name="James K.D."/>
            <person name="Quiles M."/>
            <person name="Madan Babu M."/>
            <person name="Saito T."/>
            <person name="Buchrieser C."/>
            <person name="Wardroper A."/>
            <person name="Felder M."/>
            <person name="Thangavelu M."/>
            <person name="Johnson D."/>
            <person name="Knights A."/>
            <person name="Loulseged H."/>
            <person name="Mungall K.L."/>
            <person name="Oliver K."/>
            <person name="Price C."/>
            <person name="Quail M.A."/>
            <person name="Urushihara H."/>
            <person name="Hernandez J."/>
            <person name="Rabbinowitsch E."/>
            <person name="Steffen D."/>
            <person name="Sanders M."/>
            <person name="Ma J."/>
            <person name="Kohara Y."/>
            <person name="Sharp S."/>
            <person name="Simmonds M.N."/>
            <person name="Spiegler S."/>
            <person name="Tivey A."/>
            <person name="Sugano S."/>
            <person name="White B."/>
            <person name="Walker D."/>
            <person name="Woodward J.R."/>
            <person name="Winckler T."/>
            <person name="Tanaka Y."/>
            <person name="Shaulsky G."/>
            <person name="Schleicher M."/>
            <person name="Weinstock G.M."/>
            <person name="Rosenthal A."/>
            <person name="Cox E.C."/>
            <person name="Chisholm R.L."/>
            <person name="Gibbs R.A."/>
            <person name="Loomis W.F."/>
            <person name="Platzer M."/>
            <person name="Kay R.R."/>
            <person name="Williams J.G."/>
            <person name="Dear P.H."/>
            <person name="Noegel A.A."/>
            <person name="Barrell B.G."/>
            <person name="Kuspa A."/>
        </authorList>
    </citation>
    <scope>NUCLEOTIDE SEQUENCE [LARGE SCALE GENOMIC DNA]</scope>
    <source>
        <strain>AX4</strain>
    </source>
</reference>
<protein>
    <recommendedName>
        <fullName>Putative uncharacterized transmembrane protein DDB_G0280915</fullName>
    </recommendedName>
</protein>
<gene>
    <name type="ORF">DDB_G0280915</name>
</gene>
<feature type="chain" id="PRO_0000352428" description="Putative uncharacterized transmembrane protein DDB_G0280915">
    <location>
        <begin position="1"/>
        <end position="169"/>
    </location>
</feature>
<feature type="transmembrane region" description="Helical" evidence="1">
    <location>
        <begin position="10"/>
        <end position="30"/>
    </location>
</feature>
<feature type="transmembrane region" description="Helical" evidence="1">
    <location>
        <begin position="149"/>
        <end position="169"/>
    </location>
</feature>
<sequence>MIFKINKIKNVHMYDVAIILILIIVVFKLIKSEDSKFLNNNVQFEQTKDNKFGVNSTKLNFLFNFLSSSSNKSVFEIQKKNINNNYNNNNYNNNSKKSYNYIIVGELNRNKIIRPSDIQREISEINTVEKTVDIKEKRLGSFKRGVLKIPLAFVQMIAISIALICLLIP</sequence>
<organism>
    <name type="scientific">Dictyostelium discoideum</name>
    <name type="common">Social amoeba</name>
    <dbReference type="NCBI Taxonomy" id="44689"/>
    <lineage>
        <taxon>Eukaryota</taxon>
        <taxon>Amoebozoa</taxon>
        <taxon>Evosea</taxon>
        <taxon>Eumycetozoa</taxon>
        <taxon>Dictyostelia</taxon>
        <taxon>Dictyosteliales</taxon>
        <taxon>Dictyosteliaceae</taxon>
        <taxon>Dictyostelium</taxon>
    </lineage>
</organism>
<evidence type="ECO:0000255" key="1"/>
<evidence type="ECO:0000305" key="2"/>
<keyword id="KW-0472">Membrane</keyword>
<keyword id="KW-1185">Reference proteome</keyword>
<keyword id="KW-0812">Transmembrane</keyword>
<keyword id="KW-1133">Transmembrane helix</keyword>
<comment type="subcellular location">
    <subcellularLocation>
        <location evidence="2">Membrane</location>
        <topology evidence="2">Multi-pass membrane protein</topology>
    </subcellularLocation>
</comment>